<protein>
    <recommendedName>
        <fullName>Probable acyl-CoA dehydrogenase</fullName>
        <ecNumber>1.3.99.-</ecNumber>
    </recommendedName>
</protein>
<reference key="1">
    <citation type="journal article" date="1997" name="Nature">
        <title>The complete genome sequence of the Gram-positive bacterium Bacillus subtilis.</title>
        <authorList>
            <person name="Kunst F."/>
            <person name="Ogasawara N."/>
            <person name="Moszer I."/>
            <person name="Albertini A.M."/>
            <person name="Alloni G."/>
            <person name="Azevedo V."/>
            <person name="Bertero M.G."/>
            <person name="Bessieres P."/>
            <person name="Bolotin A."/>
            <person name="Borchert S."/>
            <person name="Borriss R."/>
            <person name="Boursier L."/>
            <person name="Brans A."/>
            <person name="Braun M."/>
            <person name="Brignell S.C."/>
            <person name="Bron S."/>
            <person name="Brouillet S."/>
            <person name="Bruschi C.V."/>
            <person name="Caldwell B."/>
            <person name="Capuano V."/>
            <person name="Carter N.M."/>
            <person name="Choi S.-K."/>
            <person name="Codani J.-J."/>
            <person name="Connerton I.F."/>
            <person name="Cummings N.J."/>
            <person name="Daniel R.A."/>
            <person name="Denizot F."/>
            <person name="Devine K.M."/>
            <person name="Duesterhoeft A."/>
            <person name="Ehrlich S.D."/>
            <person name="Emmerson P.T."/>
            <person name="Entian K.-D."/>
            <person name="Errington J."/>
            <person name="Fabret C."/>
            <person name="Ferrari E."/>
            <person name="Foulger D."/>
            <person name="Fritz C."/>
            <person name="Fujita M."/>
            <person name="Fujita Y."/>
            <person name="Fuma S."/>
            <person name="Galizzi A."/>
            <person name="Galleron N."/>
            <person name="Ghim S.-Y."/>
            <person name="Glaser P."/>
            <person name="Goffeau A."/>
            <person name="Golightly E.J."/>
            <person name="Grandi G."/>
            <person name="Guiseppi G."/>
            <person name="Guy B.J."/>
            <person name="Haga K."/>
            <person name="Haiech J."/>
            <person name="Harwood C.R."/>
            <person name="Henaut A."/>
            <person name="Hilbert H."/>
            <person name="Holsappel S."/>
            <person name="Hosono S."/>
            <person name="Hullo M.-F."/>
            <person name="Itaya M."/>
            <person name="Jones L.-M."/>
            <person name="Joris B."/>
            <person name="Karamata D."/>
            <person name="Kasahara Y."/>
            <person name="Klaerr-Blanchard M."/>
            <person name="Klein C."/>
            <person name="Kobayashi Y."/>
            <person name="Koetter P."/>
            <person name="Koningstein G."/>
            <person name="Krogh S."/>
            <person name="Kumano M."/>
            <person name="Kurita K."/>
            <person name="Lapidus A."/>
            <person name="Lardinois S."/>
            <person name="Lauber J."/>
            <person name="Lazarevic V."/>
            <person name="Lee S.-M."/>
            <person name="Levine A."/>
            <person name="Liu H."/>
            <person name="Masuda S."/>
            <person name="Mauel C."/>
            <person name="Medigue C."/>
            <person name="Medina N."/>
            <person name="Mellado R.P."/>
            <person name="Mizuno M."/>
            <person name="Moestl D."/>
            <person name="Nakai S."/>
            <person name="Noback M."/>
            <person name="Noone D."/>
            <person name="O'Reilly M."/>
            <person name="Ogawa K."/>
            <person name="Ogiwara A."/>
            <person name="Oudega B."/>
            <person name="Park S.-H."/>
            <person name="Parro V."/>
            <person name="Pohl T.M."/>
            <person name="Portetelle D."/>
            <person name="Porwollik S."/>
            <person name="Prescott A.M."/>
            <person name="Presecan E."/>
            <person name="Pujic P."/>
            <person name="Purnelle B."/>
            <person name="Rapoport G."/>
            <person name="Rey M."/>
            <person name="Reynolds S."/>
            <person name="Rieger M."/>
            <person name="Rivolta C."/>
            <person name="Rocha E."/>
            <person name="Roche B."/>
            <person name="Rose M."/>
            <person name="Sadaie Y."/>
            <person name="Sato T."/>
            <person name="Scanlan E."/>
            <person name="Schleich S."/>
            <person name="Schroeter R."/>
            <person name="Scoffone F."/>
            <person name="Sekiguchi J."/>
            <person name="Sekowska A."/>
            <person name="Seror S.J."/>
            <person name="Serror P."/>
            <person name="Shin B.-S."/>
            <person name="Soldo B."/>
            <person name="Sorokin A."/>
            <person name="Tacconi E."/>
            <person name="Takagi T."/>
            <person name="Takahashi H."/>
            <person name="Takemaru K."/>
            <person name="Takeuchi M."/>
            <person name="Tamakoshi A."/>
            <person name="Tanaka T."/>
            <person name="Terpstra P."/>
            <person name="Tognoni A."/>
            <person name="Tosato V."/>
            <person name="Uchiyama S."/>
            <person name="Vandenbol M."/>
            <person name="Vannier F."/>
            <person name="Vassarotti A."/>
            <person name="Viari A."/>
            <person name="Wambutt R."/>
            <person name="Wedler E."/>
            <person name="Wedler H."/>
            <person name="Weitzenegger T."/>
            <person name="Winters P."/>
            <person name="Wipat A."/>
            <person name="Yamamoto H."/>
            <person name="Yamane K."/>
            <person name="Yasumoto K."/>
            <person name="Yata K."/>
            <person name="Yoshida K."/>
            <person name="Yoshikawa H.-F."/>
            <person name="Zumstein E."/>
            <person name="Yoshikawa H."/>
            <person name="Danchin A."/>
        </authorList>
    </citation>
    <scope>NUCLEOTIDE SEQUENCE [LARGE SCALE GENOMIC DNA]</scope>
    <source>
        <strain>168</strain>
    </source>
</reference>
<reference key="2">
    <citation type="journal article" date="2007" name="J. Biol. Chem.">
        <title>Organization and function of the YsiA regulon of Bacillus subtilis involved in fatty acid degradation.</title>
        <authorList>
            <person name="Matsuoka H."/>
            <person name="Hirooka K."/>
            <person name="Fujita Y."/>
        </authorList>
    </citation>
    <scope>GENE NAME</scope>
    <scope>INDUCTION</scope>
    <source>
        <strain>168</strain>
    </source>
</reference>
<accession>O32176</accession>
<keyword id="KW-0274">FAD</keyword>
<keyword id="KW-0276">Fatty acid metabolism</keyword>
<keyword id="KW-0285">Flavoprotein</keyword>
<keyword id="KW-0442">Lipid degradation</keyword>
<keyword id="KW-0443">Lipid metabolism</keyword>
<keyword id="KW-0560">Oxidoreductase</keyword>
<keyword id="KW-1185">Reference proteome</keyword>
<name>FADE_BACSU</name>
<proteinExistence type="evidence at transcript level"/>
<sequence length="594" mass="65336">MAKKAADVQKGGGFLIEDVTYDQMYTPEDFTDEHKMIAKTTEDYIEQDVLPHIDDIENHQFEHSVRLLKKAGELGLLGADVPEEYGGLGLDKISSALITEKFSRAGSFSLSYGAHVGIGSLPIVFFGSEEQKKKYLPGLASGEKIAAYALTEPGSGSDALGAKTTAVLNEAGTHYVLTGEKQWITNSAFADVFVVYAKVDGDKFSAFIVEKEFPGVSTGPEEKKMGIKGSSTRTLILDQAEVPKENLLGEIGKGHVIAFNILNIGRYKLAVGTIGASKRVIELSAAYANQRRQFKTPIAGFSLTQEKIGTMASRLYAMESSVYRTVGLFEDNMSQFTAEDLKDGRQIAKSIAEYAIECSLNKVFGSETLDYIVDEGVQIHGGYGFMQEYEVERAYRDSRINRIFEGTNEINRLIVPSTFLKKALKGELPLFEKAQSLQEELMMLMPEEPGSGVLEQEKYIVKQAKKIALFAAGLAAQKYGKAIDREQEILVNVADIVSNVYAMESAVLRTEKAIAAQGAEKAAQKVLYTEIFVQEAFNEIEAHAKESLIAMEEGDSLRMMLSALRKLTRVTPKNVIQKKREAAAGIFEAEKYTV</sequence>
<gene>
    <name type="primary">fadE</name>
    <name type="synonym">yusJ</name>
    <name type="ordered locus">BSU32820</name>
</gene>
<organism>
    <name type="scientific">Bacillus subtilis (strain 168)</name>
    <dbReference type="NCBI Taxonomy" id="224308"/>
    <lineage>
        <taxon>Bacteria</taxon>
        <taxon>Bacillati</taxon>
        <taxon>Bacillota</taxon>
        <taxon>Bacilli</taxon>
        <taxon>Bacillales</taxon>
        <taxon>Bacillaceae</taxon>
        <taxon>Bacillus</taxon>
    </lineage>
</organism>
<evidence type="ECO:0000250" key="1"/>
<evidence type="ECO:0000269" key="2">
    <source>
    </source>
</evidence>
<evidence type="ECO:0000305" key="3"/>
<comment type="function">
    <text>Involved in the degradation of long-chain fatty acids.</text>
</comment>
<comment type="catalytic activity">
    <reaction>
        <text>a 2,3-saturated acyl-CoA + A = a 2,3-dehydroacyl-CoA + AH2</text>
        <dbReference type="Rhea" id="RHEA:48608"/>
        <dbReference type="ChEBI" id="CHEBI:13193"/>
        <dbReference type="ChEBI" id="CHEBI:17499"/>
        <dbReference type="ChEBI" id="CHEBI:60015"/>
        <dbReference type="ChEBI" id="CHEBI:65111"/>
    </reaction>
</comment>
<comment type="cofactor">
    <cofactor evidence="1">
        <name>FAD</name>
        <dbReference type="ChEBI" id="CHEBI:57692"/>
    </cofactor>
</comment>
<comment type="pathway">
    <text>Lipid metabolism; fatty acid beta-oxidation.</text>
</comment>
<comment type="induction">
    <text evidence="2">Repressed by FadR in the absence of LCFAs (fatty acids of 14-20 carbon atoms). When LCFAs are present in the medium, they are converted to long-chain acyl-CoAs, which antagonize FadR as to its binding to fadR boxes on target DNA and thus derepress transcription.</text>
</comment>
<comment type="similarity">
    <text evidence="3">Belongs to the acyl-CoA dehydrogenase family.</text>
</comment>
<dbReference type="EC" id="1.3.99.-"/>
<dbReference type="EMBL" id="AL009126">
    <property type="protein sequence ID" value="CAB15271.1"/>
    <property type="molecule type" value="Genomic_DNA"/>
</dbReference>
<dbReference type="PIR" id="C70021">
    <property type="entry name" value="C70021"/>
</dbReference>
<dbReference type="RefSeq" id="NP_391161.1">
    <property type="nucleotide sequence ID" value="NC_000964.3"/>
</dbReference>
<dbReference type="RefSeq" id="WP_003244094.1">
    <property type="nucleotide sequence ID" value="NZ_OZ025638.1"/>
</dbReference>
<dbReference type="SMR" id="O32176"/>
<dbReference type="FunCoup" id="O32176">
    <property type="interactions" value="282"/>
</dbReference>
<dbReference type="STRING" id="224308.BSU32820"/>
<dbReference type="jPOST" id="O32176"/>
<dbReference type="PaxDb" id="224308-BSU32820"/>
<dbReference type="EnsemblBacteria" id="CAB15271">
    <property type="protein sequence ID" value="CAB15271"/>
    <property type="gene ID" value="BSU_32820"/>
</dbReference>
<dbReference type="GeneID" id="936717"/>
<dbReference type="KEGG" id="bsu:BSU32820"/>
<dbReference type="PATRIC" id="fig|224308.179.peg.3556"/>
<dbReference type="eggNOG" id="COG1960">
    <property type="taxonomic scope" value="Bacteria"/>
</dbReference>
<dbReference type="InParanoid" id="O32176"/>
<dbReference type="OrthoDB" id="9802447at2"/>
<dbReference type="PhylomeDB" id="O32176"/>
<dbReference type="BioCyc" id="BSUB:BSU32820-MONOMER"/>
<dbReference type="UniPathway" id="UPA00659"/>
<dbReference type="Proteomes" id="UP000001570">
    <property type="component" value="Chromosome"/>
</dbReference>
<dbReference type="GO" id="GO:0003995">
    <property type="term" value="F:acyl-CoA dehydrogenase activity"/>
    <property type="evidence" value="ECO:0000318"/>
    <property type="project" value="GO_Central"/>
</dbReference>
<dbReference type="GO" id="GO:0050660">
    <property type="term" value="F:flavin adenine dinucleotide binding"/>
    <property type="evidence" value="ECO:0007669"/>
    <property type="project" value="InterPro"/>
</dbReference>
<dbReference type="GO" id="GO:0006635">
    <property type="term" value="P:fatty acid beta-oxidation"/>
    <property type="evidence" value="ECO:0007669"/>
    <property type="project" value="UniProtKB-UniPathway"/>
</dbReference>
<dbReference type="FunFam" id="1.20.140.10:FF:000019">
    <property type="entry name" value="Acyl-CoA dehydrogenase"/>
    <property type="match status" value="1"/>
</dbReference>
<dbReference type="FunFam" id="2.40.110.10:FF:000017">
    <property type="entry name" value="Acyl-CoA dehydrogenase"/>
    <property type="match status" value="1"/>
</dbReference>
<dbReference type="FunFam" id="1.10.540.10:FF:000001">
    <property type="entry name" value="Very long-chain-specific acyl-CoA dehydrogenase, mitochondrial"/>
    <property type="match status" value="1"/>
</dbReference>
<dbReference type="Gene3D" id="1.10.540.10">
    <property type="entry name" value="Acyl-CoA dehydrogenase/oxidase, N-terminal domain"/>
    <property type="match status" value="1"/>
</dbReference>
<dbReference type="Gene3D" id="2.40.110.10">
    <property type="entry name" value="Butyryl-CoA Dehydrogenase, subunit A, domain 2"/>
    <property type="match status" value="1"/>
</dbReference>
<dbReference type="Gene3D" id="1.20.140.10">
    <property type="entry name" value="Butyryl-CoA Dehydrogenase, subunit A, domain 3"/>
    <property type="match status" value="2"/>
</dbReference>
<dbReference type="InterPro" id="IPR049426">
    <property type="entry name" value="Acyl-CoA-dh-like_C"/>
</dbReference>
<dbReference type="InterPro" id="IPR006089">
    <property type="entry name" value="Acyl-CoA_DH_CS"/>
</dbReference>
<dbReference type="InterPro" id="IPR006091">
    <property type="entry name" value="Acyl-CoA_Oxase/DH_mid-dom"/>
</dbReference>
<dbReference type="InterPro" id="IPR046373">
    <property type="entry name" value="Acyl-CoA_Oxase/DH_mid-dom_sf"/>
</dbReference>
<dbReference type="InterPro" id="IPR036250">
    <property type="entry name" value="AcylCo_DH-like_C"/>
</dbReference>
<dbReference type="InterPro" id="IPR009075">
    <property type="entry name" value="AcylCo_DH/oxidase_C"/>
</dbReference>
<dbReference type="InterPro" id="IPR013786">
    <property type="entry name" value="AcylCoA_DH/ox_N"/>
</dbReference>
<dbReference type="InterPro" id="IPR037069">
    <property type="entry name" value="AcylCoA_DH/ox_N_sf"/>
</dbReference>
<dbReference type="InterPro" id="IPR009100">
    <property type="entry name" value="AcylCoA_DH/oxidase_NM_dom_sf"/>
</dbReference>
<dbReference type="PANTHER" id="PTHR43884">
    <property type="entry name" value="ACYL-COA DEHYDROGENASE"/>
    <property type="match status" value="1"/>
</dbReference>
<dbReference type="PANTHER" id="PTHR43884:SF12">
    <property type="entry name" value="ISOVALERYL-COA DEHYDROGENASE, MITOCHONDRIAL-RELATED"/>
    <property type="match status" value="1"/>
</dbReference>
<dbReference type="Pfam" id="PF21263">
    <property type="entry name" value="Acyl-CoA-dh_C"/>
    <property type="match status" value="1"/>
</dbReference>
<dbReference type="Pfam" id="PF00441">
    <property type="entry name" value="Acyl-CoA_dh_1"/>
    <property type="match status" value="1"/>
</dbReference>
<dbReference type="Pfam" id="PF02770">
    <property type="entry name" value="Acyl-CoA_dh_M"/>
    <property type="match status" value="1"/>
</dbReference>
<dbReference type="Pfam" id="PF02771">
    <property type="entry name" value="Acyl-CoA_dh_N"/>
    <property type="match status" value="1"/>
</dbReference>
<dbReference type="SUPFAM" id="SSF47203">
    <property type="entry name" value="Acyl-CoA dehydrogenase C-terminal domain-like"/>
    <property type="match status" value="1"/>
</dbReference>
<dbReference type="SUPFAM" id="SSF56645">
    <property type="entry name" value="Acyl-CoA dehydrogenase NM domain-like"/>
    <property type="match status" value="1"/>
</dbReference>
<dbReference type="PROSITE" id="PS00072">
    <property type="entry name" value="ACYL_COA_DH_1"/>
    <property type="match status" value="1"/>
</dbReference>
<dbReference type="PROSITE" id="PS00073">
    <property type="entry name" value="ACYL_COA_DH_2"/>
    <property type="match status" value="1"/>
</dbReference>
<feature type="chain" id="PRO_0000360672" description="Probable acyl-CoA dehydrogenase">
    <location>
        <begin position="1"/>
        <end position="594"/>
    </location>
</feature>
<feature type="active site" description="Proton acceptor" evidence="1">
    <location>
        <position position="405"/>
    </location>
</feature>